<protein>
    <recommendedName>
        <fullName evidence="1">Large ribosomal subunit protein bL35</fullName>
    </recommendedName>
    <alternativeName>
        <fullName evidence="2">50S ribosomal protein L35</fullName>
    </alternativeName>
</protein>
<evidence type="ECO:0000255" key="1">
    <source>
        <dbReference type="HAMAP-Rule" id="MF_00514"/>
    </source>
</evidence>
<evidence type="ECO:0000305" key="2"/>
<reference key="1">
    <citation type="journal article" date="2008" name="Environ. Microbiol.">
        <title>The complete genome sequence of Moorella thermoacetica (f. Clostridium thermoaceticum).</title>
        <authorList>
            <person name="Pierce E."/>
            <person name="Xie G."/>
            <person name="Barabote R.D."/>
            <person name="Saunders E."/>
            <person name="Han C.S."/>
            <person name="Detter J.C."/>
            <person name="Richardson P."/>
            <person name="Brettin T.S."/>
            <person name="Das A."/>
            <person name="Ljungdahl L.G."/>
            <person name="Ragsdale S.W."/>
        </authorList>
    </citation>
    <scope>NUCLEOTIDE SEQUENCE [LARGE SCALE GENOMIC DNA]</scope>
    <source>
        <strain>ATCC 39073 / JCM 9320</strain>
    </source>
</reference>
<gene>
    <name evidence="1" type="primary">rpmI</name>
    <name type="ordered locus">Moth_1757</name>
</gene>
<name>RL35_MOOTA</name>
<proteinExistence type="inferred from homology"/>
<organism>
    <name type="scientific">Moorella thermoacetica (strain ATCC 39073 / JCM 9320)</name>
    <dbReference type="NCBI Taxonomy" id="264732"/>
    <lineage>
        <taxon>Bacteria</taxon>
        <taxon>Bacillati</taxon>
        <taxon>Bacillota</taxon>
        <taxon>Clostridia</taxon>
        <taxon>Moorellales</taxon>
        <taxon>Moorellaceae</taxon>
        <taxon>Moorella</taxon>
    </lineage>
</organism>
<dbReference type="EMBL" id="CP000232">
    <property type="protein sequence ID" value="ABC20058.1"/>
    <property type="molecule type" value="Genomic_DNA"/>
</dbReference>
<dbReference type="RefSeq" id="YP_430601.1">
    <property type="nucleotide sequence ID" value="NC_007644.1"/>
</dbReference>
<dbReference type="SMR" id="Q2RHN1"/>
<dbReference type="STRING" id="264732.Moth_1757"/>
<dbReference type="EnsemblBacteria" id="ABC20058">
    <property type="protein sequence ID" value="ABC20058"/>
    <property type="gene ID" value="Moth_1757"/>
</dbReference>
<dbReference type="KEGG" id="mta:Moth_1757"/>
<dbReference type="PATRIC" id="fig|264732.11.peg.1907"/>
<dbReference type="eggNOG" id="COG0291">
    <property type="taxonomic scope" value="Bacteria"/>
</dbReference>
<dbReference type="HOGENOM" id="CLU_169643_4_3_9"/>
<dbReference type="OrthoDB" id="47476at2"/>
<dbReference type="GO" id="GO:0022625">
    <property type="term" value="C:cytosolic large ribosomal subunit"/>
    <property type="evidence" value="ECO:0007669"/>
    <property type="project" value="TreeGrafter"/>
</dbReference>
<dbReference type="GO" id="GO:0003735">
    <property type="term" value="F:structural constituent of ribosome"/>
    <property type="evidence" value="ECO:0007669"/>
    <property type="project" value="InterPro"/>
</dbReference>
<dbReference type="GO" id="GO:0006412">
    <property type="term" value="P:translation"/>
    <property type="evidence" value="ECO:0007669"/>
    <property type="project" value="UniProtKB-UniRule"/>
</dbReference>
<dbReference type="FunFam" id="4.10.410.60:FF:000001">
    <property type="entry name" value="50S ribosomal protein L35"/>
    <property type="match status" value="1"/>
</dbReference>
<dbReference type="Gene3D" id="4.10.410.60">
    <property type="match status" value="1"/>
</dbReference>
<dbReference type="HAMAP" id="MF_00514">
    <property type="entry name" value="Ribosomal_bL35"/>
    <property type="match status" value="1"/>
</dbReference>
<dbReference type="InterPro" id="IPR001706">
    <property type="entry name" value="Ribosomal_bL35"/>
</dbReference>
<dbReference type="InterPro" id="IPR021137">
    <property type="entry name" value="Ribosomal_bL35-like"/>
</dbReference>
<dbReference type="InterPro" id="IPR037229">
    <property type="entry name" value="Ribosomal_bL35_sf"/>
</dbReference>
<dbReference type="NCBIfam" id="TIGR00001">
    <property type="entry name" value="rpmI_bact"/>
    <property type="match status" value="1"/>
</dbReference>
<dbReference type="PANTHER" id="PTHR33343">
    <property type="entry name" value="54S RIBOSOMAL PROTEIN BL35M"/>
    <property type="match status" value="1"/>
</dbReference>
<dbReference type="PANTHER" id="PTHR33343:SF1">
    <property type="entry name" value="LARGE RIBOSOMAL SUBUNIT PROTEIN BL35M"/>
    <property type="match status" value="1"/>
</dbReference>
<dbReference type="Pfam" id="PF01632">
    <property type="entry name" value="Ribosomal_L35p"/>
    <property type="match status" value="1"/>
</dbReference>
<dbReference type="PRINTS" id="PR00064">
    <property type="entry name" value="RIBOSOMALL35"/>
</dbReference>
<dbReference type="SUPFAM" id="SSF143034">
    <property type="entry name" value="L35p-like"/>
    <property type="match status" value="1"/>
</dbReference>
<feature type="chain" id="PRO_0000258703" description="Large ribosomal subunit protein bL35">
    <location>
        <begin position="1"/>
        <end position="66"/>
    </location>
</feature>
<sequence>MPKMKTHRGAAKRLRVTASGKVKRFRAYKSHLLASKTPKQKRRLRHPALVDSTDRRRVARLLPYEA</sequence>
<comment type="similarity">
    <text evidence="1">Belongs to the bacterial ribosomal protein bL35 family.</text>
</comment>
<keyword id="KW-0687">Ribonucleoprotein</keyword>
<keyword id="KW-0689">Ribosomal protein</keyword>
<accession>Q2RHN1</accession>